<feature type="chain" id="PRO_1000090046" description="tRNA sulfurtransferase">
    <location>
        <begin position="1"/>
        <end position="483"/>
    </location>
</feature>
<feature type="domain" description="THUMP" evidence="1">
    <location>
        <begin position="62"/>
        <end position="166"/>
    </location>
</feature>
<feature type="domain" description="Rhodanese" evidence="1">
    <location>
        <begin position="405"/>
        <end position="483"/>
    </location>
</feature>
<feature type="active site" description="Cysteine persulfide intermediate" evidence="1">
    <location>
        <position position="457"/>
    </location>
</feature>
<feature type="binding site" evidence="1">
    <location>
        <begin position="184"/>
        <end position="185"/>
    </location>
    <ligand>
        <name>ATP</name>
        <dbReference type="ChEBI" id="CHEBI:30616"/>
    </ligand>
</feature>
<feature type="binding site" evidence="1">
    <location>
        <position position="266"/>
    </location>
    <ligand>
        <name>ATP</name>
        <dbReference type="ChEBI" id="CHEBI:30616"/>
    </ligand>
</feature>
<feature type="binding site" evidence="1">
    <location>
        <position position="288"/>
    </location>
    <ligand>
        <name>ATP</name>
        <dbReference type="ChEBI" id="CHEBI:30616"/>
    </ligand>
</feature>
<feature type="binding site" evidence="1">
    <location>
        <position position="297"/>
    </location>
    <ligand>
        <name>ATP</name>
        <dbReference type="ChEBI" id="CHEBI:30616"/>
    </ligand>
</feature>
<feature type="disulfide bond" description="Redox-active" evidence="1">
    <location>
        <begin position="345"/>
        <end position="457"/>
    </location>
</feature>
<comment type="function">
    <text evidence="1">Catalyzes the ATP-dependent transfer of a sulfur to tRNA to produce 4-thiouridine in position 8 of tRNAs, which functions as a near-UV photosensor. Also catalyzes the transfer of sulfur to the sulfur carrier protein ThiS, forming ThiS-thiocarboxylate. This is a step in the synthesis of thiazole, in the thiamine biosynthesis pathway. The sulfur is donated as persulfide by IscS.</text>
</comment>
<comment type="catalytic activity">
    <reaction evidence="1">
        <text>[ThiI sulfur-carrier protein]-S-sulfanyl-L-cysteine + a uridine in tRNA + 2 reduced [2Fe-2S]-[ferredoxin] + ATP + H(+) = [ThiI sulfur-carrier protein]-L-cysteine + a 4-thiouridine in tRNA + 2 oxidized [2Fe-2S]-[ferredoxin] + AMP + diphosphate</text>
        <dbReference type="Rhea" id="RHEA:24176"/>
        <dbReference type="Rhea" id="RHEA-COMP:10000"/>
        <dbReference type="Rhea" id="RHEA-COMP:10001"/>
        <dbReference type="Rhea" id="RHEA-COMP:13337"/>
        <dbReference type="Rhea" id="RHEA-COMP:13338"/>
        <dbReference type="Rhea" id="RHEA-COMP:13339"/>
        <dbReference type="Rhea" id="RHEA-COMP:13340"/>
        <dbReference type="ChEBI" id="CHEBI:15378"/>
        <dbReference type="ChEBI" id="CHEBI:29950"/>
        <dbReference type="ChEBI" id="CHEBI:30616"/>
        <dbReference type="ChEBI" id="CHEBI:33019"/>
        <dbReference type="ChEBI" id="CHEBI:33737"/>
        <dbReference type="ChEBI" id="CHEBI:33738"/>
        <dbReference type="ChEBI" id="CHEBI:61963"/>
        <dbReference type="ChEBI" id="CHEBI:65315"/>
        <dbReference type="ChEBI" id="CHEBI:136798"/>
        <dbReference type="ChEBI" id="CHEBI:456215"/>
        <dbReference type="EC" id="2.8.1.4"/>
    </reaction>
</comment>
<comment type="catalytic activity">
    <reaction evidence="1">
        <text>[ThiS sulfur-carrier protein]-C-terminal Gly-Gly-AMP + S-sulfanyl-L-cysteinyl-[cysteine desulfurase] + AH2 = [ThiS sulfur-carrier protein]-C-terminal-Gly-aminoethanethioate + L-cysteinyl-[cysteine desulfurase] + A + AMP + 2 H(+)</text>
        <dbReference type="Rhea" id="RHEA:43340"/>
        <dbReference type="Rhea" id="RHEA-COMP:12157"/>
        <dbReference type="Rhea" id="RHEA-COMP:12158"/>
        <dbReference type="Rhea" id="RHEA-COMP:12910"/>
        <dbReference type="Rhea" id="RHEA-COMP:19908"/>
        <dbReference type="ChEBI" id="CHEBI:13193"/>
        <dbReference type="ChEBI" id="CHEBI:15378"/>
        <dbReference type="ChEBI" id="CHEBI:17499"/>
        <dbReference type="ChEBI" id="CHEBI:29950"/>
        <dbReference type="ChEBI" id="CHEBI:61963"/>
        <dbReference type="ChEBI" id="CHEBI:90618"/>
        <dbReference type="ChEBI" id="CHEBI:232372"/>
        <dbReference type="ChEBI" id="CHEBI:456215"/>
    </reaction>
</comment>
<comment type="pathway">
    <text evidence="1">Cofactor biosynthesis; thiamine diphosphate biosynthesis.</text>
</comment>
<comment type="subcellular location">
    <subcellularLocation>
        <location evidence="1">Cytoplasm</location>
    </subcellularLocation>
</comment>
<comment type="similarity">
    <text evidence="1">Belongs to the ThiI family.</text>
</comment>
<proteinExistence type="inferred from homology"/>
<organism>
    <name type="scientific">Yersinia pseudotuberculosis serotype IB (strain PB1/+)</name>
    <dbReference type="NCBI Taxonomy" id="502801"/>
    <lineage>
        <taxon>Bacteria</taxon>
        <taxon>Pseudomonadati</taxon>
        <taxon>Pseudomonadota</taxon>
        <taxon>Gammaproteobacteria</taxon>
        <taxon>Enterobacterales</taxon>
        <taxon>Yersiniaceae</taxon>
        <taxon>Yersinia</taxon>
    </lineage>
</organism>
<protein>
    <recommendedName>
        <fullName evidence="1">tRNA sulfurtransferase</fullName>
        <ecNumber evidence="1">2.8.1.4</ecNumber>
    </recommendedName>
    <alternativeName>
        <fullName evidence="1">Sulfur carrier protein ThiS sulfurtransferase</fullName>
    </alternativeName>
    <alternativeName>
        <fullName evidence="1">Thiamine biosynthesis protein ThiI</fullName>
    </alternativeName>
    <alternativeName>
        <fullName evidence="1">tRNA 4-thiouridine synthase</fullName>
    </alternativeName>
</protein>
<evidence type="ECO:0000255" key="1">
    <source>
        <dbReference type="HAMAP-Rule" id="MF_00021"/>
    </source>
</evidence>
<reference key="1">
    <citation type="submission" date="2008-04" db="EMBL/GenBank/DDBJ databases">
        <title>Complete sequence of Yersinia pseudotuberculosis PB1/+.</title>
        <authorList>
            <person name="Copeland A."/>
            <person name="Lucas S."/>
            <person name="Lapidus A."/>
            <person name="Glavina del Rio T."/>
            <person name="Dalin E."/>
            <person name="Tice H."/>
            <person name="Bruce D."/>
            <person name="Goodwin L."/>
            <person name="Pitluck S."/>
            <person name="Munk A.C."/>
            <person name="Brettin T."/>
            <person name="Detter J.C."/>
            <person name="Han C."/>
            <person name="Tapia R."/>
            <person name="Schmutz J."/>
            <person name="Larimer F."/>
            <person name="Land M."/>
            <person name="Hauser L."/>
            <person name="Challacombe J.F."/>
            <person name="Green L."/>
            <person name="Lindler L.E."/>
            <person name="Nikolich M.P."/>
            <person name="Richardson P."/>
        </authorList>
    </citation>
    <scope>NUCLEOTIDE SEQUENCE [LARGE SCALE GENOMIC DNA]</scope>
    <source>
        <strain>PB1/+</strain>
    </source>
</reference>
<name>THII_YERPB</name>
<accession>B2K6U1</accession>
<dbReference type="EC" id="2.8.1.4" evidence="1"/>
<dbReference type="EMBL" id="CP001048">
    <property type="protein sequence ID" value="ACC87965.1"/>
    <property type="molecule type" value="Genomic_DNA"/>
</dbReference>
<dbReference type="RefSeq" id="WP_011191864.1">
    <property type="nucleotide sequence ID" value="NZ_CP009780.1"/>
</dbReference>
<dbReference type="SMR" id="B2K6U1"/>
<dbReference type="KEGG" id="ypb:YPTS_0984"/>
<dbReference type="PATRIC" id="fig|502801.10.peg.325"/>
<dbReference type="UniPathway" id="UPA00060"/>
<dbReference type="GO" id="GO:0005829">
    <property type="term" value="C:cytosol"/>
    <property type="evidence" value="ECO:0007669"/>
    <property type="project" value="TreeGrafter"/>
</dbReference>
<dbReference type="GO" id="GO:0005524">
    <property type="term" value="F:ATP binding"/>
    <property type="evidence" value="ECO:0007669"/>
    <property type="project" value="UniProtKB-UniRule"/>
</dbReference>
<dbReference type="GO" id="GO:0004810">
    <property type="term" value="F:CCA tRNA nucleotidyltransferase activity"/>
    <property type="evidence" value="ECO:0007669"/>
    <property type="project" value="InterPro"/>
</dbReference>
<dbReference type="GO" id="GO:0000049">
    <property type="term" value="F:tRNA binding"/>
    <property type="evidence" value="ECO:0007669"/>
    <property type="project" value="UniProtKB-UniRule"/>
</dbReference>
<dbReference type="GO" id="GO:0140741">
    <property type="term" value="F:tRNA-uracil-4 sulfurtransferase activity"/>
    <property type="evidence" value="ECO:0007669"/>
    <property type="project" value="UniProtKB-EC"/>
</dbReference>
<dbReference type="GO" id="GO:0009228">
    <property type="term" value="P:thiamine biosynthetic process"/>
    <property type="evidence" value="ECO:0007669"/>
    <property type="project" value="UniProtKB-KW"/>
</dbReference>
<dbReference type="GO" id="GO:0009229">
    <property type="term" value="P:thiamine diphosphate biosynthetic process"/>
    <property type="evidence" value="ECO:0007669"/>
    <property type="project" value="UniProtKB-UniRule"/>
</dbReference>
<dbReference type="GO" id="GO:0052837">
    <property type="term" value="P:thiazole biosynthetic process"/>
    <property type="evidence" value="ECO:0007669"/>
    <property type="project" value="InterPro"/>
</dbReference>
<dbReference type="GO" id="GO:0002937">
    <property type="term" value="P:tRNA 4-thiouridine biosynthesis"/>
    <property type="evidence" value="ECO:0007669"/>
    <property type="project" value="TreeGrafter"/>
</dbReference>
<dbReference type="CDD" id="cd01712">
    <property type="entry name" value="PPase_ThiI"/>
    <property type="match status" value="1"/>
</dbReference>
<dbReference type="CDD" id="cd00158">
    <property type="entry name" value="RHOD"/>
    <property type="match status" value="1"/>
</dbReference>
<dbReference type="CDD" id="cd11716">
    <property type="entry name" value="THUMP_ThiI"/>
    <property type="match status" value="1"/>
</dbReference>
<dbReference type="FunFam" id="3.30.2130.30:FF:000002">
    <property type="entry name" value="tRNA sulfurtransferase"/>
    <property type="match status" value="1"/>
</dbReference>
<dbReference type="FunFam" id="3.40.250.10:FF:000003">
    <property type="entry name" value="tRNA sulfurtransferase"/>
    <property type="match status" value="1"/>
</dbReference>
<dbReference type="FunFam" id="3.40.50.620:FF:000029">
    <property type="entry name" value="tRNA sulfurtransferase"/>
    <property type="match status" value="1"/>
</dbReference>
<dbReference type="Gene3D" id="3.30.2130.30">
    <property type="match status" value="1"/>
</dbReference>
<dbReference type="Gene3D" id="3.40.50.620">
    <property type="entry name" value="HUPs"/>
    <property type="match status" value="1"/>
</dbReference>
<dbReference type="Gene3D" id="3.40.250.10">
    <property type="entry name" value="Rhodanese-like domain"/>
    <property type="match status" value="1"/>
</dbReference>
<dbReference type="HAMAP" id="MF_00021">
    <property type="entry name" value="ThiI"/>
    <property type="match status" value="1"/>
</dbReference>
<dbReference type="InterPro" id="IPR001763">
    <property type="entry name" value="Rhodanese-like_dom"/>
</dbReference>
<dbReference type="InterPro" id="IPR036873">
    <property type="entry name" value="Rhodanese-like_dom_sf"/>
</dbReference>
<dbReference type="InterPro" id="IPR014729">
    <property type="entry name" value="Rossmann-like_a/b/a_fold"/>
</dbReference>
<dbReference type="InterPro" id="IPR020536">
    <property type="entry name" value="ThiI_AANH"/>
</dbReference>
<dbReference type="InterPro" id="IPR054173">
    <property type="entry name" value="ThiI_fer"/>
</dbReference>
<dbReference type="InterPro" id="IPR049961">
    <property type="entry name" value="ThiI_N"/>
</dbReference>
<dbReference type="InterPro" id="IPR026340">
    <property type="entry name" value="THII_Thiazole_biosynth_dom"/>
</dbReference>
<dbReference type="InterPro" id="IPR004114">
    <property type="entry name" value="THUMP_dom"/>
</dbReference>
<dbReference type="InterPro" id="IPR049962">
    <property type="entry name" value="THUMP_ThiI"/>
</dbReference>
<dbReference type="InterPro" id="IPR003720">
    <property type="entry name" value="tRNA_STrfase"/>
</dbReference>
<dbReference type="InterPro" id="IPR050102">
    <property type="entry name" value="tRNA_sulfurtransferase_ThiI"/>
</dbReference>
<dbReference type="NCBIfam" id="TIGR04271">
    <property type="entry name" value="ThiI_C_thiazole"/>
    <property type="match status" value="1"/>
</dbReference>
<dbReference type="NCBIfam" id="TIGR00342">
    <property type="entry name" value="tRNA uracil 4-sulfurtransferase ThiI"/>
    <property type="match status" value="1"/>
</dbReference>
<dbReference type="PANTHER" id="PTHR43209">
    <property type="entry name" value="TRNA SULFURTRANSFERASE"/>
    <property type="match status" value="1"/>
</dbReference>
<dbReference type="PANTHER" id="PTHR43209:SF1">
    <property type="entry name" value="TRNA SULFURTRANSFERASE"/>
    <property type="match status" value="1"/>
</dbReference>
<dbReference type="Pfam" id="PF00581">
    <property type="entry name" value="Rhodanese"/>
    <property type="match status" value="1"/>
</dbReference>
<dbReference type="Pfam" id="PF02568">
    <property type="entry name" value="ThiI"/>
    <property type="match status" value="1"/>
</dbReference>
<dbReference type="Pfam" id="PF22025">
    <property type="entry name" value="ThiI_fer"/>
    <property type="match status" value="1"/>
</dbReference>
<dbReference type="Pfam" id="PF02926">
    <property type="entry name" value="THUMP"/>
    <property type="match status" value="1"/>
</dbReference>
<dbReference type="SMART" id="SM00981">
    <property type="entry name" value="THUMP"/>
    <property type="match status" value="1"/>
</dbReference>
<dbReference type="SUPFAM" id="SSF52402">
    <property type="entry name" value="Adenine nucleotide alpha hydrolases-like"/>
    <property type="match status" value="1"/>
</dbReference>
<dbReference type="SUPFAM" id="SSF52821">
    <property type="entry name" value="Rhodanese/Cell cycle control phosphatase"/>
    <property type="match status" value="1"/>
</dbReference>
<dbReference type="SUPFAM" id="SSF143437">
    <property type="entry name" value="THUMP domain-like"/>
    <property type="match status" value="1"/>
</dbReference>
<dbReference type="PROSITE" id="PS50206">
    <property type="entry name" value="RHODANESE_3"/>
    <property type="match status" value="1"/>
</dbReference>
<dbReference type="PROSITE" id="PS51165">
    <property type="entry name" value="THUMP"/>
    <property type="match status" value="1"/>
</dbReference>
<sequence length="483" mass="54836">MKFIIKLFPEITIKSQSVRLRFIKILTTNIRNVLKHLEDDTLAIVRHWDHIELRTKDGNLGPEICDALTRIPGIHHILEVEDRSYSDMHNIFEQTLEAYRETLVGKTFCVRVKRRGKHEFSSGDVERYVGGGLNQHIESAKVNLTRPQVTVNLEVDQDKLILVKARHEGLGGFPIGTQEDVLSLISGGFDSGVSSYMLMRRGCRVHYCFFNLGGSAHEIGVKQVAHYLWNRFGSSHRVRFIAIDFEPVVGEILEKVEDGQMGVVLKRMMVRAASQVAERYGVQALVTGEALGQVSSQTLTNLRLIDNASDTLILRPLISHDKEHIINLARQIGTEDFAKTMPEYCGVISKSPTVKAVKAKIEEEESHFDFSILDRVVSEAKNVDIREIAQQSREQVVEVETVAELADTDVLLDIRAPDEQEEKPLKLDQVEVRSLPFYKLSSQFADLDQSKTYLLYCDRGVMSRLQALYLREQGYTNVKVYRP</sequence>
<gene>
    <name evidence="1" type="primary">thiI</name>
    <name type="ordered locus">YPTS_0984</name>
</gene>
<keyword id="KW-0067">ATP-binding</keyword>
<keyword id="KW-0963">Cytoplasm</keyword>
<keyword id="KW-1015">Disulfide bond</keyword>
<keyword id="KW-0547">Nucleotide-binding</keyword>
<keyword id="KW-0676">Redox-active center</keyword>
<keyword id="KW-0694">RNA-binding</keyword>
<keyword id="KW-0784">Thiamine biosynthesis</keyword>
<keyword id="KW-0808">Transferase</keyword>
<keyword id="KW-0820">tRNA-binding</keyword>